<gene>
    <name type="primary">Trh</name>
</gene>
<sequence length="256" mass="29195">MQGPWLMMALALIFVLTGIPKSCALLEAAQEEGAVTPDLPGLEKVQVRPERRFLRKDLQRVRGDLGAALDSWITKRQHPGKREEKEEDVEAEERGDLGEVGAWRPHKRQHPGRRANQDKDSWSDEGDSDWLPPSWLPDFFLDSWFSDAPQVKRQHPGRRSFPWMESDVTKRQHPGRRFIDPELQRSWEETEGEEGGLMPEKRQHPGKRAVGHPCGPQGICGQTGLLQLLGDLSRGQETLAKQTPQLEAWVREPLEE</sequence>
<reference key="1">
    <citation type="journal article" date="1992" name="Brain Res. Mol. Brain Res.">
        <title>Cloning of the mouse hypothalamic preprothyrotropin-releasing hormone (TRH) cDNA and tissue distribution of its mRNA.</title>
        <authorList>
            <person name="Satoh T."/>
            <person name="Yamada M."/>
            <person name="Monden T."/>
            <person name="Iizuka M."/>
            <person name="Mori M."/>
        </authorList>
    </citation>
    <scope>NUCLEOTIDE SEQUENCE [MRNA]</scope>
    <scope>TISSUE SPECIFICITY</scope>
    <source>
        <strain>BALB/cJ</strain>
    </source>
</reference>
<reference key="2">
    <citation type="journal article" date="2004" name="Genome Res.">
        <title>The status, quality, and expansion of the NIH full-length cDNA project: the Mammalian Gene Collection (MGC).</title>
        <authorList>
            <consortium name="The MGC Project Team"/>
        </authorList>
    </citation>
    <scope>NUCLEOTIDE SEQUENCE [LARGE SCALE MRNA]</scope>
    <source>
        <strain>129/Sv X 129/SvCp</strain>
    </source>
</reference>
<proteinExistence type="evidence at transcript level"/>
<accession>Q62361</accession>
<accession>Q7TMT4</accession>
<dbReference type="EMBL" id="X59387">
    <property type="protein sequence ID" value="CAA42030.1"/>
    <property type="molecule type" value="mRNA"/>
</dbReference>
<dbReference type="EMBL" id="BC053493">
    <property type="protein sequence ID" value="AAH53493.1"/>
    <property type="molecule type" value="mRNA"/>
</dbReference>
<dbReference type="CCDS" id="CCDS20375.1"/>
<dbReference type="PIR" id="A43955">
    <property type="entry name" value="RTMST"/>
</dbReference>
<dbReference type="RefSeq" id="NP_033452.2">
    <property type="nucleotide sequence ID" value="NM_009426.3"/>
</dbReference>
<dbReference type="FunCoup" id="Q62361">
    <property type="interactions" value="518"/>
</dbReference>
<dbReference type="STRING" id="10090.ENSMUSP00000006046"/>
<dbReference type="iPTMnet" id="Q62361"/>
<dbReference type="PhosphoSitePlus" id="Q62361"/>
<dbReference type="PaxDb" id="10090-ENSMUSP00000006046"/>
<dbReference type="PeptideAtlas" id="Q62361"/>
<dbReference type="ProteomicsDB" id="259182"/>
<dbReference type="Antibodypedia" id="33301">
    <property type="antibodies" value="139 antibodies from 26 providers"/>
</dbReference>
<dbReference type="DNASU" id="22044"/>
<dbReference type="Ensembl" id="ENSMUST00000006046.5">
    <property type="protein sequence ID" value="ENSMUSP00000006046.5"/>
    <property type="gene ID" value="ENSMUSG00000005892.5"/>
</dbReference>
<dbReference type="GeneID" id="22044"/>
<dbReference type="KEGG" id="mmu:22044"/>
<dbReference type="UCSC" id="uc009cyw.2">
    <property type="organism name" value="mouse"/>
</dbReference>
<dbReference type="AGR" id="MGI:98823"/>
<dbReference type="CTD" id="7200"/>
<dbReference type="MGI" id="MGI:98823">
    <property type="gene designation" value="Trh"/>
</dbReference>
<dbReference type="VEuPathDB" id="HostDB:ENSMUSG00000005892"/>
<dbReference type="eggNOG" id="ENOG502RWH0">
    <property type="taxonomic scope" value="Eukaryota"/>
</dbReference>
<dbReference type="GeneTree" id="ENSGT00390000016951"/>
<dbReference type="HOGENOM" id="CLU_101029_0_0_1"/>
<dbReference type="InParanoid" id="Q62361"/>
<dbReference type="OMA" id="QESFTCN"/>
<dbReference type="OrthoDB" id="9949225at2759"/>
<dbReference type="PhylomeDB" id="Q62361"/>
<dbReference type="TreeFam" id="TF332073"/>
<dbReference type="Reactome" id="R-MMU-375276">
    <property type="pathway name" value="Peptide ligand-binding receptors"/>
</dbReference>
<dbReference type="Reactome" id="R-MMU-416476">
    <property type="pathway name" value="G alpha (q) signalling events"/>
</dbReference>
<dbReference type="BioGRID-ORCS" id="22044">
    <property type="hits" value="3 hits in 76 CRISPR screens"/>
</dbReference>
<dbReference type="PRO" id="PR:Q62361"/>
<dbReference type="Proteomes" id="UP000000589">
    <property type="component" value="Chromosome 6"/>
</dbReference>
<dbReference type="RNAct" id="Q62361">
    <property type="molecule type" value="protein"/>
</dbReference>
<dbReference type="Bgee" id="ENSMUSG00000005892">
    <property type="expression patterns" value="Expressed in endodermal part of digestive tract and 61 other cell types or tissues"/>
</dbReference>
<dbReference type="GO" id="GO:0005576">
    <property type="term" value="C:extracellular region"/>
    <property type="evidence" value="ECO:0007669"/>
    <property type="project" value="UniProtKB-SubCell"/>
</dbReference>
<dbReference type="GO" id="GO:0030141">
    <property type="term" value="C:secretory granule"/>
    <property type="evidence" value="ECO:0007669"/>
    <property type="project" value="Ensembl"/>
</dbReference>
<dbReference type="GO" id="GO:0008437">
    <property type="term" value="F:thyrotropin-releasing hormone activity"/>
    <property type="evidence" value="ECO:0000266"/>
    <property type="project" value="MGI"/>
</dbReference>
<dbReference type="GO" id="GO:0007628">
    <property type="term" value="P:adult walking behavior"/>
    <property type="evidence" value="ECO:0000316"/>
    <property type="project" value="MGI"/>
</dbReference>
<dbReference type="GO" id="GO:0042755">
    <property type="term" value="P:eating behavior"/>
    <property type="evidence" value="ECO:0007669"/>
    <property type="project" value="Ensembl"/>
</dbReference>
<dbReference type="GO" id="GO:0001692">
    <property type="term" value="P:histamine metabolic process"/>
    <property type="evidence" value="ECO:0007669"/>
    <property type="project" value="Ensembl"/>
</dbReference>
<dbReference type="GO" id="GO:0009755">
    <property type="term" value="P:hormone-mediated signaling pathway"/>
    <property type="evidence" value="ECO:0007669"/>
    <property type="project" value="InterPro"/>
</dbReference>
<dbReference type="GO" id="GO:2000252">
    <property type="term" value="P:negative regulation of feeding behavior"/>
    <property type="evidence" value="ECO:0007669"/>
    <property type="project" value="Ensembl"/>
</dbReference>
<dbReference type="GO" id="GO:0014050">
    <property type="term" value="P:negative regulation of glutamate secretion"/>
    <property type="evidence" value="ECO:0007669"/>
    <property type="project" value="Ensembl"/>
</dbReference>
<dbReference type="GO" id="GO:0014054">
    <property type="term" value="P:positive regulation of gamma-aminobutyric acid secretion"/>
    <property type="evidence" value="ECO:0007669"/>
    <property type="project" value="Ensembl"/>
</dbReference>
<dbReference type="GO" id="GO:0032024">
    <property type="term" value="P:positive regulation of insulin secretion"/>
    <property type="evidence" value="ECO:0007669"/>
    <property type="project" value="Ensembl"/>
</dbReference>
<dbReference type="GO" id="GO:0051412">
    <property type="term" value="P:response to corticosterone"/>
    <property type="evidence" value="ECO:0007669"/>
    <property type="project" value="Ensembl"/>
</dbReference>
<dbReference type="GO" id="GO:0045471">
    <property type="term" value="P:response to ethanol"/>
    <property type="evidence" value="ECO:0007669"/>
    <property type="project" value="Ensembl"/>
</dbReference>
<dbReference type="GO" id="GO:0009749">
    <property type="term" value="P:response to glucose"/>
    <property type="evidence" value="ECO:0007669"/>
    <property type="project" value="Ensembl"/>
</dbReference>
<dbReference type="GO" id="GO:0001666">
    <property type="term" value="P:response to hypoxia"/>
    <property type="evidence" value="ECO:0007669"/>
    <property type="project" value="Ensembl"/>
</dbReference>
<dbReference type="InterPro" id="IPR008857">
    <property type="entry name" value="TRH"/>
</dbReference>
<dbReference type="PANTHER" id="PTHR17530">
    <property type="entry name" value="PRO-THYROTROPIN-RELEASING HORMONE"/>
    <property type="match status" value="1"/>
</dbReference>
<dbReference type="PANTHER" id="PTHR17530:SF2">
    <property type="entry name" value="PRO-THYROTROPIN-RELEASING HORMONE"/>
    <property type="match status" value="1"/>
</dbReference>
<dbReference type="Pfam" id="PF05438">
    <property type="entry name" value="TRH"/>
    <property type="match status" value="2"/>
</dbReference>
<dbReference type="PIRSF" id="PIRSF001795">
    <property type="entry name" value="TRH"/>
    <property type="match status" value="1"/>
</dbReference>
<name>TRH_MOUSE</name>
<keyword id="KW-0027">Amidation</keyword>
<keyword id="KW-0165">Cleavage on pair of basic residues</keyword>
<keyword id="KW-0372">Hormone</keyword>
<keyword id="KW-1185">Reference proteome</keyword>
<keyword id="KW-0677">Repeat</keyword>
<keyword id="KW-0964">Secreted</keyword>
<keyword id="KW-0732">Signal</keyword>
<feature type="signal peptide" evidence="1">
    <location>
        <begin position="1"/>
        <end position="24"/>
    </location>
</feature>
<feature type="chain" id="PRO_0000022516" description="Pro-thyrotropin-releasing hormone">
    <location>
        <begin position="25"/>
        <end position="256"/>
    </location>
</feature>
<feature type="peptide" id="PRO_0000022517" description="Thyrotropin-releasing hormone" evidence="1">
    <location>
        <begin position="77"/>
        <end position="79"/>
    </location>
</feature>
<feature type="peptide" id="PRO_0000022518" description="Thyrotropin-releasing hormone" evidence="1">
    <location>
        <begin position="109"/>
        <end position="111"/>
    </location>
</feature>
<feature type="peptide" id="PRO_0000022519" description="Thyrotropin-releasing hormone" evidence="1">
    <location>
        <begin position="154"/>
        <end position="156"/>
    </location>
</feature>
<feature type="peptide" id="PRO_0000022520" description="Thyrotropin-releasing hormone" evidence="1">
    <location>
        <begin position="172"/>
        <end position="174"/>
    </location>
</feature>
<feature type="peptide" id="PRO_0000022521" description="Thyrotropin-releasing hormone" evidence="1">
    <location>
        <begin position="203"/>
        <end position="205"/>
    </location>
</feature>
<feature type="region of interest" description="Disordered" evidence="2">
    <location>
        <begin position="76"/>
        <end position="128"/>
    </location>
</feature>
<feature type="region of interest" description="Disordered" evidence="2">
    <location>
        <begin position="151"/>
        <end position="215"/>
    </location>
</feature>
<feature type="compositionally biased region" description="Basic residues" evidence="2">
    <location>
        <begin position="104"/>
        <end position="113"/>
    </location>
</feature>
<feature type="compositionally biased region" description="Basic and acidic residues" evidence="2">
    <location>
        <begin position="177"/>
        <end position="188"/>
    </location>
</feature>
<feature type="modified residue" description="Proline amide" evidence="1">
    <location>
        <position position="79"/>
    </location>
</feature>
<feature type="modified residue" description="Proline amide" evidence="1">
    <location>
        <position position="111"/>
    </location>
</feature>
<feature type="modified residue" description="Proline amide" evidence="1">
    <location>
        <position position="156"/>
    </location>
</feature>
<feature type="modified residue" description="Proline amide" evidence="1">
    <location>
        <position position="174"/>
    </location>
</feature>
<feature type="modified residue" description="Proline amide" evidence="1">
    <location>
        <position position="205"/>
    </location>
</feature>
<feature type="sequence conflict" description="In Ref. 1; CAA42030." evidence="4" ref="1">
    <original>A</original>
    <variation>G</variation>
    <location>
        <position position="28"/>
    </location>
</feature>
<feature type="sequence conflict" description="In Ref. 2; AAH53493." evidence="4" ref="2">
    <original>E</original>
    <variation>L</variation>
    <location>
        <position position="86"/>
    </location>
</feature>
<feature type="sequence conflict" description="In Ref. 2; AAH53493." evidence="4" ref="2">
    <location>
        <position position="89"/>
    </location>
</feature>
<evidence type="ECO:0000250" key="1"/>
<evidence type="ECO:0000256" key="2">
    <source>
        <dbReference type="SAM" id="MobiDB-lite"/>
    </source>
</evidence>
<evidence type="ECO:0000269" key="3">
    <source>
    </source>
</evidence>
<evidence type="ECO:0000305" key="4"/>
<organism>
    <name type="scientific">Mus musculus</name>
    <name type="common">Mouse</name>
    <dbReference type="NCBI Taxonomy" id="10090"/>
    <lineage>
        <taxon>Eukaryota</taxon>
        <taxon>Metazoa</taxon>
        <taxon>Chordata</taxon>
        <taxon>Craniata</taxon>
        <taxon>Vertebrata</taxon>
        <taxon>Euteleostomi</taxon>
        <taxon>Mammalia</taxon>
        <taxon>Eutheria</taxon>
        <taxon>Euarchontoglires</taxon>
        <taxon>Glires</taxon>
        <taxon>Rodentia</taxon>
        <taxon>Myomorpha</taxon>
        <taxon>Muroidea</taxon>
        <taxon>Muridae</taxon>
        <taxon>Murinae</taxon>
        <taxon>Mus</taxon>
        <taxon>Mus</taxon>
    </lineage>
</organism>
<protein>
    <recommendedName>
        <fullName>Pro-thyrotropin-releasing hormone</fullName>
        <shortName>Pro-TRH</shortName>
    </recommendedName>
    <alternativeName>
        <fullName>Prothyroliberin</fullName>
    </alternativeName>
    <component>
        <recommendedName>
            <fullName>Thyrotropin-releasing hormone</fullName>
            <shortName>TRH</shortName>
        </recommendedName>
        <alternativeName>
            <fullName>Protirelin</fullName>
        </alternativeName>
        <alternativeName>
            <fullName>TSH-releasing factor</fullName>
        </alternativeName>
        <alternativeName>
            <fullName>Thyroliberin</fullName>
        </alternativeName>
        <alternativeName>
            <fullName>Thyrotropin-releasing factor</fullName>
            <shortName>TRF</shortName>
        </alternativeName>
    </component>
</protein>
<comment type="function">
    <text>Functions as a regulator of the biosynthesis of TSH in the anterior pituitary gland and as a neurotransmitter/ neuromodulator in the central and peripheral nervous systems.</text>
</comment>
<comment type="subcellular location">
    <subcellularLocation>
        <location>Secreted</location>
    </subcellularLocation>
</comment>
<comment type="tissue specificity">
    <text evidence="3">Specifically expressed in hypothalamus and testis.</text>
</comment>
<comment type="similarity">
    <text evidence="4">Belongs to the TRH family.</text>
</comment>